<organism>
    <name type="scientific">Perodicticus potto edwarsi</name>
    <name type="common">Potto</name>
    <dbReference type="NCBI Taxonomy" id="9473"/>
    <lineage>
        <taxon>Eukaryota</taxon>
        <taxon>Metazoa</taxon>
        <taxon>Chordata</taxon>
        <taxon>Craniata</taxon>
        <taxon>Vertebrata</taxon>
        <taxon>Euteleostomi</taxon>
        <taxon>Mammalia</taxon>
        <taxon>Eutheria</taxon>
        <taxon>Euarchontoglires</taxon>
        <taxon>Primates</taxon>
        <taxon>Strepsirrhini</taxon>
        <taxon>Lorisiformes</taxon>
        <taxon>Lorisidae</taxon>
        <taxon>Perodicticus</taxon>
    </lineage>
</organism>
<proteinExistence type="inferred from homology"/>
<dbReference type="EMBL" id="DQ067483">
    <property type="protein sequence ID" value="AAZ30451.1"/>
    <property type="molecule type" value="Genomic_DNA"/>
</dbReference>
<dbReference type="SMR" id="Q2VL80"/>
<dbReference type="GO" id="GO:0034399">
    <property type="term" value="C:nuclear periphery"/>
    <property type="evidence" value="ECO:0000250"/>
    <property type="project" value="UniProtKB"/>
</dbReference>
<dbReference type="GO" id="GO:0000981">
    <property type="term" value="F:DNA-binding transcription factor activity, RNA polymerase II-specific"/>
    <property type="evidence" value="ECO:0007669"/>
    <property type="project" value="InterPro"/>
</dbReference>
<dbReference type="GO" id="GO:0000977">
    <property type="term" value="F:RNA polymerase II transcription regulatory region sequence-specific DNA binding"/>
    <property type="evidence" value="ECO:0007669"/>
    <property type="project" value="TreeGrafter"/>
</dbReference>
<dbReference type="GO" id="GO:0000976">
    <property type="term" value="F:transcription cis-regulatory region binding"/>
    <property type="evidence" value="ECO:0000250"/>
    <property type="project" value="UniProtKB"/>
</dbReference>
<dbReference type="GO" id="GO:0048598">
    <property type="term" value="P:embryonic morphogenesis"/>
    <property type="evidence" value="ECO:0007669"/>
    <property type="project" value="TreeGrafter"/>
</dbReference>
<dbReference type="GO" id="GO:0048839">
    <property type="term" value="P:inner ear development"/>
    <property type="evidence" value="ECO:0000250"/>
    <property type="project" value="UniProtKB"/>
</dbReference>
<dbReference type="GO" id="GO:0010629">
    <property type="term" value="P:negative regulation of gene expression"/>
    <property type="evidence" value="ECO:0000250"/>
    <property type="project" value="UniProtKB"/>
</dbReference>
<dbReference type="GO" id="GO:1901330">
    <property type="term" value="P:negative regulation of odontoblast differentiation"/>
    <property type="evidence" value="ECO:0000250"/>
    <property type="project" value="UniProtKB"/>
</dbReference>
<dbReference type="GO" id="GO:0043584">
    <property type="term" value="P:nose development"/>
    <property type="evidence" value="ECO:0000250"/>
    <property type="project" value="UniProtKB"/>
</dbReference>
<dbReference type="GO" id="GO:0045787">
    <property type="term" value="P:positive regulation of cell cycle"/>
    <property type="evidence" value="ECO:0000250"/>
    <property type="project" value="UniProtKB"/>
</dbReference>
<dbReference type="GO" id="GO:0042482">
    <property type="term" value="P:positive regulation of odontogenesis"/>
    <property type="evidence" value="ECO:0000250"/>
    <property type="project" value="UniProtKB"/>
</dbReference>
<dbReference type="GO" id="GO:0042481">
    <property type="term" value="P:regulation of odontogenesis"/>
    <property type="evidence" value="ECO:0000250"/>
    <property type="project" value="UniProtKB"/>
</dbReference>
<dbReference type="GO" id="GO:0060021">
    <property type="term" value="P:roof of mouth development"/>
    <property type="evidence" value="ECO:0000250"/>
    <property type="project" value="UniProtKB"/>
</dbReference>
<dbReference type="CDD" id="cd00086">
    <property type="entry name" value="homeodomain"/>
    <property type="match status" value="1"/>
</dbReference>
<dbReference type="FunFam" id="1.10.10.60:FF:000134">
    <property type="entry name" value="Homeobox protein MSX-1"/>
    <property type="match status" value="1"/>
</dbReference>
<dbReference type="Gene3D" id="1.10.10.60">
    <property type="entry name" value="Homeodomain-like"/>
    <property type="match status" value="1"/>
</dbReference>
<dbReference type="InterPro" id="IPR001356">
    <property type="entry name" value="HD"/>
</dbReference>
<dbReference type="InterPro" id="IPR020479">
    <property type="entry name" value="HD_metazoa"/>
</dbReference>
<dbReference type="InterPro" id="IPR017970">
    <property type="entry name" value="Homeobox_CS"/>
</dbReference>
<dbReference type="InterPro" id="IPR009057">
    <property type="entry name" value="Homeodomain-like_sf"/>
</dbReference>
<dbReference type="InterPro" id="IPR050674">
    <property type="entry name" value="Msh_Homeobox_Regulators"/>
</dbReference>
<dbReference type="PANTHER" id="PTHR24338">
    <property type="entry name" value="HOMEOBOX PROTEIN MSX"/>
    <property type="match status" value="1"/>
</dbReference>
<dbReference type="PANTHER" id="PTHR24338:SF8">
    <property type="entry name" value="HOMEOBOX PROTEIN MSX-1"/>
    <property type="match status" value="1"/>
</dbReference>
<dbReference type="Pfam" id="PF00046">
    <property type="entry name" value="Homeodomain"/>
    <property type="match status" value="1"/>
</dbReference>
<dbReference type="PRINTS" id="PR00024">
    <property type="entry name" value="HOMEOBOX"/>
</dbReference>
<dbReference type="SMART" id="SM00389">
    <property type="entry name" value="HOX"/>
    <property type="match status" value="1"/>
</dbReference>
<dbReference type="SUPFAM" id="SSF46689">
    <property type="entry name" value="Homeodomain-like"/>
    <property type="match status" value="1"/>
</dbReference>
<dbReference type="PROSITE" id="PS00027">
    <property type="entry name" value="HOMEOBOX_1"/>
    <property type="match status" value="1"/>
</dbReference>
<dbReference type="PROSITE" id="PS50071">
    <property type="entry name" value="HOMEOBOX_2"/>
    <property type="match status" value="1"/>
</dbReference>
<reference key="1">
    <citation type="journal article" date="2006" name="Mol. Biol. Evol.">
        <title>Molecular evolution of the primate developmental genes MSX1 and PAX9.</title>
        <authorList>
            <person name="Perry G.H."/>
            <person name="Verrelli B.C."/>
            <person name="Stone A.C."/>
        </authorList>
    </citation>
    <scope>NUCLEOTIDE SEQUENCE [GENOMIC DNA]</scope>
</reference>
<sequence>MTSLPLGVKVEDSVFGKPAGVGAGQGPSAAAGTAAAVSVDEEGAKPKVSPSLLPFSVEALMADHRKPGAKESALAASEGAQAASGGAQPLGIRSGSLGAQDSPSSPRPLGHFSVGGLLKLPEDALVKAESPEKPERTPWMQSPRFSPPPARRLSPPACTLRKHKTNRKPRTPFTTAQLLALERKFRQKQYLSIAERAEFSSSLSLTETQVKIWFQNRRAKAKRLQEAELEKLKMAAKPMLPPAAFGLSFPLGGPAAVAAAAGASLYGASGPFQRAALPVAPVGLYTAHVGYSMYHLT</sequence>
<name>MSX1_PERPO</name>
<feature type="chain" id="PRO_0000049093" description="Homeobox protein MSX-1">
    <location>
        <begin position="1" status="less than"/>
        <end position="297"/>
    </location>
</feature>
<feature type="DNA-binding region" description="Homeobox" evidence="3">
    <location>
        <begin position="166"/>
        <end position="225"/>
    </location>
</feature>
<feature type="region of interest" description="Disordered" evidence="4">
    <location>
        <begin position="68"/>
        <end position="114"/>
    </location>
</feature>
<feature type="region of interest" description="Disordered" evidence="4">
    <location>
        <begin position="127"/>
        <end position="157"/>
    </location>
</feature>
<feature type="compositionally biased region" description="Low complexity" evidence="4">
    <location>
        <begin position="71"/>
        <end position="87"/>
    </location>
</feature>
<feature type="compositionally biased region" description="Basic and acidic residues" evidence="4">
    <location>
        <begin position="127"/>
        <end position="136"/>
    </location>
</feature>
<feature type="cross-link" description="Glycyl lysine isopeptide (Lys-Gly) (interchain with G-Cter in SUMO)" evidence="1">
    <location>
        <position position="9"/>
    </location>
</feature>
<feature type="cross-link" description="Glycyl lysine isopeptide (Lys-Gly) (interchain with G-Cter in SUMO)" evidence="1">
    <location>
        <position position="127"/>
    </location>
</feature>
<feature type="non-terminal residue">
    <location>
        <position position="1"/>
    </location>
</feature>
<protein>
    <recommendedName>
        <fullName evidence="5">Homeobox protein MSX-1</fullName>
    </recommendedName>
    <alternativeName>
        <fullName>Msh homeobox 1-like protein</fullName>
    </alternativeName>
</protein>
<accession>Q2VL80</accession>
<comment type="function">
    <text evidence="1 2">Acts as a transcriptional repressor (By similarity). Capable of transcription autoinactivation (By similarity). Binds to the consensus sequence 5'-C/GTAAT-3' in downstream activin regulatory elements (DARE) in the gene promoter, thereby repressing the transcription of CGA/alpha-GSU and GNRHR (By similarity). Represses transcription of myoblast differentiation factors (By similarity). Binds to core enhancer regions in target gene promoters of myoblast differentiation factors with binding specificity facilitated by interaction with PIAS1 (By similarity). Regulates, in a stage-specific manner, a developmental program of gene expression in the fetal tooth bud that controls odontoblast differentiation and proliferation of dental mesenchymal cells (By similarity). At the bud stage, required for mesenchymal molar tooth bud development via facilitating reciprocal signaling between dental epithelial and mesenchymal cells (By similarity). May also regulate expression of Wnt antagonists such as DKK2 and SFPR2 in the developing tooth mesenchyme (By similarity). Required for BMP4 expression in dental mesenchyme cells (By similarity). Also, in response to BMP4, required for BMP4 expression in neighboring dental epithelial cells (By similarity). Required for maximal FGF4-induced expression of SDC1 in dental mesenchyme cells (By similarity). Also in response to SDC1, required for SDC1 expression in neighboring dental epithelial cells (By similarity). At the early bell stage, acts to drive proliferation of dental mesenchyme cells, however during the late bell stage acts as an homeostatic regulator of the cell cycle (By similarity). Regulates proliferation and inhibits premature mesenchymal odontogenesis during the bell stage via inhibition of the Wnt signaling component CTNNB1 and subsequent repression of the odontoblast differentiation factors BMP2, BMP4, LEF1, ALPL and BGLAP/OCN (By similarity). Additionally, required for correct development and fusion of the palatal shelves and embryonic mandibular formation (By similarity). Plays a role in embryonic bone formation of the middle ear, skull and nasal bones (By similarity). Required for correct formation and thickness of the nail plate (By similarity). May play a role in limb-pattern formation (By similarity).</text>
</comment>
<comment type="subunit">
    <text evidence="1">Interacts with CREBBP/CBP, TBP and SP1; interaction with these transcription activators may inhibit autoinactivation (By similarity). Interacts (via C-terminus) with PIAS1 (via N-terminus) (By similarity). Interacts with H1-5 (By similarity).</text>
</comment>
<comment type="subcellular location">
    <subcellularLocation>
        <location evidence="1">Nucleus</location>
    </subcellularLocation>
    <text evidence="1">Interaction with PIAS1 is required for localization to the nuclear periphery (By similarity).</text>
</comment>
<comment type="PTM">
    <text evidence="1">Sumoylated by PIAS1, desumoylated by SENP1 (By similarity). Sumoylation of Lys-9 and Lys-127 not required for interaction with H1-5, transcriptional repression, inhibition of myoblast differentiation, or binding to gene promoters (By similarity).</text>
</comment>
<comment type="similarity">
    <text evidence="5">Belongs to the Msh homeobox family.</text>
</comment>
<gene>
    <name evidence="1" type="primary">MSX1</name>
</gene>
<keyword id="KW-0217">Developmental protein</keyword>
<keyword id="KW-0238">DNA-binding</keyword>
<keyword id="KW-0371">Homeobox</keyword>
<keyword id="KW-1017">Isopeptide bond</keyword>
<keyword id="KW-0539">Nucleus</keyword>
<keyword id="KW-0678">Repressor</keyword>
<keyword id="KW-0804">Transcription</keyword>
<keyword id="KW-0805">Transcription regulation</keyword>
<keyword id="KW-0832">Ubl conjugation</keyword>
<evidence type="ECO:0000250" key="1">
    <source>
        <dbReference type="UniProtKB" id="P13297"/>
    </source>
</evidence>
<evidence type="ECO:0000250" key="2">
    <source>
        <dbReference type="UniProtKB" id="P28360"/>
    </source>
</evidence>
<evidence type="ECO:0000255" key="3">
    <source>
        <dbReference type="PROSITE-ProRule" id="PRU00108"/>
    </source>
</evidence>
<evidence type="ECO:0000256" key="4">
    <source>
        <dbReference type="SAM" id="MobiDB-lite"/>
    </source>
</evidence>
<evidence type="ECO:0000305" key="5"/>